<accession>P9WK27</accession>
<accession>L0TDP4</accession>
<accession>P96887</accession>
<proteinExistence type="evidence at protein level"/>
<sequence length="222" mass="23010">MTRLVLGSASPGRLKVLRDAGIEPLVIASHVDEDVVIAALGPDAVPSDVVCVLAAAKAAQVATTLTGTQRIVAADCVVVACDSMLYIEGRLLGKPASIDEAREQWRSMAGRAGQLYTGHGVIRLQDNKTVYRAAETAITTVYFGTPSASDLEAYLASGESLRVAGGFTLDGLGGWFIDGVQGNPSNVIGLSLPLLRSLVQRCGLSVAALWAGNAGGPAHKQQ</sequence>
<evidence type="ECO:0000255" key="1">
    <source>
        <dbReference type="HAMAP-Rule" id="MF_00528"/>
    </source>
</evidence>
<dbReference type="EC" id="3.6.1.9" evidence="1"/>
<dbReference type="EMBL" id="AL123456">
    <property type="protein sequence ID" value="CCP46101.1"/>
    <property type="molecule type" value="Genomic_DNA"/>
</dbReference>
<dbReference type="PIR" id="C70980">
    <property type="entry name" value="C70980"/>
</dbReference>
<dbReference type="RefSeq" id="NP_217799.1">
    <property type="nucleotide sequence ID" value="NC_000962.3"/>
</dbReference>
<dbReference type="RefSeq" id="WP_003417146.1">
    <property type="nucleotide sequence ID" value="NZ_NVQJ01000003.1"/>
</dbReference>
<dbReference type="SMR" id="P9WK27"/>
<dbReference type="FunCoup" id="P9WK27">
    <property type="interactions" value="262"/>
</dbReference>
<dbReference type="STRING" id="83332.Rv3282"/>
<dbReference type="PaxDb" id="83332-Rv3282"/>
<dbReference type="DNASU" id="888718"/>
<dbReference type="GeneID" id="888718"/>
<dbReference type="KEGG" id="mtu:Rv3282"/>
<dbReference type="KEGG" id="mtv:RVBD_3282"/>
<dbReference type="TubercuList" id="Rv3282"/>
<dbReference type="eggNOG" id="COG0424">
    <property type="taxonomic scope" value="Bacteria"/>
</dbReference>
<dbReference type="InParanoid" id="P9WK27"/>
<dbReference type="OrthoDB" id="3527985at2"/>
<dbReference type="PhylomeDB" id="P9WK27"/>
<dbReference type="Proteomes" id="UP000001584">
    <property type="component" value="Chromosome"/>
</dbReference>
<dbReference type="GO" id="GO:0005737">
    <property type="term" value="C:cytoplasm"/>
    <property type="evidence" value="ECO:0007669"/>
    <property type="project" value="UniProtKB-SubCell"/>
</dbReference>
<dbReference type="GO" id="GO:0009274">
    <property type="term" value="C:peptidoglycan-based cell wall"/>
    <property type="evidence" value="ECO:0007005"/>
    <property type="project" value="MTBBASE"/>
</dbReference>
<dbReference type="GO" id="GO:0047429">
    <property type="term" value="F:nucleoside triphosphate diphosphatase activity"/>
    <property type="evidence" value="ECO:0000318"/>
    <property type="project" value="GO_Central"/>
</dbReference>
<dbReference type="GO" id="GO:0009117">
    <property type="term" value="P:nucleotide metabolic process"/>
    <property type="evidence" value="ECO:0007669"/>
    <property type="project" value="UniProtKB-KW"/>
</dbReference>
<dbReference type="CDD" id="cd00555">
    <property type="entry name" value="Maf"/>
    <property type="match status" value="1"/>
</dbReference>
<dbReference type="FunFam" id="3.90.950.10:FF:000010">
    <property type="entry name" value="Nucleoside triphosphate pyrophosphatase"/>
    <property type="match status" value="1"/>
</dbReference>
<dbReference type="Gene3D" id="3.90.950.10">
    <property type="match status" value="1"/>
</dbReference>
<dbReference type="HAMAP" id="MF_00528">
    <property type="entry name" value="Maf"/>
    <property type="match status" value="1"/>
</dbReference>
<dbReference type="InterPro" id="IPR029001">
    <property type="entry name" value="ITPase-like_fam"/>
</dbReference>
<dbReference type="InterPro" id="IPR003697">
    <property type="entry name" value="Maf-like"/>
</dbReference>
<dbReference type="NCBIfam" id="TIGR00172">
    <property type="entry name" value="maf"/>
    <property type="match status" value="1"/>
</dbReference>
<dbReference type="PANTHER" id="PTHR43213">
    <property type="entry name" value="BIFUNCTIONAL DTTP/UTP PYROPHOSPHATASE/METHYLTRANSFERASE PROTEIN-RELATED"/>
    <property type="match status" value="1"/>
</dbReference>
<dbReference type="PANTHER" id="PTHR43213:SF5">
    <property type="entry name" value="BIFUNCTIONAL DTTP_UTP PYROPHOSPHATASE_METHYLTRANSFERASE PROTEIN-RELATED"/>
    <property type="match status" value="1"/>
</dbReference>
<dbReference type="Pfam" id="PF02545">
    <property type="entry name" value="Maf"/>
    <property type="match status" value="1"/>
</dbReference>
<dbReference type="PIRSF" id="PIRSF006305">
    <property type="entry name" value="Maf"/>
    <property type="match status" value="1"/>
</dbReference>
<dbReference type="SUPFAM" id="SSF52972">
    <property type="entry name" value="ITPase-like"/>
    <property type="match status" value="1"/>
</dbReference>
<comment type="function">
    <text evidence="1">Nucleoside triphosphate pyrophosphatase. May have a dual role in cell division arrest and in preventing the incorporation of modified nucleotides into cellular nucleic acids.</text>
</comment>
<comment type="catalytic activity">
    <reaction evidence="1">
        <text>a ribonucleoside 5'-triphosphate + H2O = a ribonucleoside 5'-phosphate + diphosphate + H(+)</text>
        <dbReference type="Rhea" id="RHEA:23996"/>
        <dbReference type="ChEBI" id="CHEBI:15377"/>
        <dbReference type="ChEBI" id="CHEBI:15378"/>
        <dbReference type="ChEBI" id="CHEBI:33019"/>
        <dbReference type="ChEBI" id="CHEBI:58043"/>
        <dbReference type="ChEBI" id="CHEBI:61557"/>
        <dbReference type="EC" id="3.6.1.9"/>
    </reaction>
</comment>
<comment type="catalytic activity">
    <reaction evidence="1">
        <text>a 2'-deoxyribonucleoside 5'-triphosphate + H2O = a 2'-deoxyribonucleoside 5'-phosphate + diphosphate + H(+)</text>
        <dbReference type="Rhea" id="RHEA:44644"/>
        <dbReference type="ChEBI" id="CHEBI:15377"/>
        <dbReference type="ChEBI" id="CHEBI:15378"/>
        <dbReference type="ChEBI" id="CHEBI:33019"/>
        <dbReference type="ChEBI" id="CHEBI:61560"/>
        <dbReference type="ChEBI" id="CHEBI:65317"/>
        <dbReference type="EC" id="3.6.1.9"/>
    </reaction>
</comment>
<comment type="cofactor">
    <cofactor evidence="1">
        <name>a divalent metal cation</name>
        <dbReference type="ChEBI" id="CHEBI:60240"/>
    </cofactor>
</comment>
<comment type="subcellular location">
    <subcellularLocation>
        <location evidence="1">Cytoplasm</location>
    </subcellularLocation>
</comment>
<comment type="miscellaneous">
    <text>Was identified as a high-confidence drug target.</text>
</comment>
<comment type="similarity">
    <text evidence="1">Belongs to the Maf family.</text>
</comment>
<feature type="chain" id="PRO_0000123030" description="Nucleoside triphosphate pyrophosphatase">
    <location>
        <begin position="1"/>
        <end position="222"/>
    </location>
</feature>
<feature type="active site" description="Proton acceptor" evidence="1">
    <location>
        <position position="82"/>
    </location>
</feature>
<reference key="1">
    <citation type="journal article" date="1998" name="Nature">
        <title>Deciphering the biology of Mycobacterium tuberculosis from the complete genome sequence.</title>
        <authorList>
            <person name="Cole S.T."/>
            <person name="Brosch R."/>
            <person name="Parkhill J."/>
            <person name="Garnier T."/>
            <person name="Churcher C.M."/>
            <person name="Harris D.E."/>
            <person name="Gordon S.V."/>
            <person name="Eiglmeier K."/>
            <person name="Gas S."/>
            <person name="Barry C.E. III"/>
            <person name="Tekaia F."/>
            <person name="Badcock K."/>
            <person name="Basham D."/>
            <person name="Brown D."/>
            <person name="Chillingworth T."/>
            <person name="Connor R."/>
            <person name="Davies R.M."/>
            <person name="Devlin K."/>
            <person name="Feltwell T."/>
            <person name="Gentles S."/>
            <person name="Hamlin N."/>
            <person name="Holroyd S."/>
            <person name="Hornsby T."/>
            <person name="Jagels K."/>
            <person name="Krogh A."/>
            <person name="McLean J."/>
            <person name="Moule S."/>
            <person name="Murphy L.D."/>
            <person name="Oliver S."/>
            <person name="Osborne J."/>
            <person name="Quail M.A."/>
            <person name="Rajandream M.A."/>
            <person name="Rogers J."/>
            <person name="Rutter S."/>
            <person name="Seeger K."/>
            <person name="Skelton S."/>
            <person name="Squares S."/>
            <person name="Squares R."/>
            <person name="Sulston J.E."/>
            <person name="Taylor K."/>
            <person name="Whitehead S."/>
            <person name="Barrell B.G."/>
        </authorList>
    </citation>
    <scope>NUCLEOTIDE SEQUENCE [LARGE SCALE GENOMIC DNA]</scope>
    <source>
        <strain>ATCC 25618 / H37Rv</strain>
    </source>
</reference>
<reference key="2">
    <citation type="journal article" date="2008" name="BMC Syst. Biol.">
        <title>targetTB: a target identification pipeline for Mycobacterium tuberculosis through an interactome, reactome and genome-scale structural analysis.</title>
        <authorList>
            <person name="Raman K."/>
            <person name="Yeturu K."/>
            <person name="Chandra N."/>
        </authorList>
    </citation>
    <scope>IDENTIFICATION AS A DRUG TARGET [LARGE SCALE ANALYSIS]</scope>
</reference>
<reference key="3">
    <citation type="journal article" date="2011" name="Mol. Cell. Proteomics">
        <title>Proteogenomic analysis of Mycobacterium tuberculosis by high resolution mass spectrometry.</title>
        <authorList>
            <person name="Kelkar D.S."/>
            <person name="Kumar D."/>
            <person name="Kumar P."/>
            <person name="Balakrishnan L."/>
            <person name="Muthusamy B."/>
            <person name="Yadav A.K."/>
            <person name="Shrivastava P."/>
            <person name="Marimuthu A."/>
            <person name="Anand S."/>
            <person name="Sundaram H."/>
            <person name="Kingsbury R."/>
            <person name="Harsha H.C."/>
            <person name="Nair B."/>
            <person name="Prasad T.S."/>
            <person name="Chauhan D.S."/>
            <person name="Katoch K."/>
            <person name="Katoch V.M."/>
            <person name="Kumar P."/>
            <person name="Chaerkady R."/>
            <person name="Ramachandran S."/>
            <person name="Dash D."/>
            <person name="Pandey A."/>
        </authorList>
    </citation>
    <scope>IDENTIFICATION BY MASS SPECTROMETRY [LARGE SCALE ANALYSIS]</scope>
    <source>
        <strain>ATCC 25618 / H37Rv</strain>
    </source>
</reference>
<gene>
    <name type="ordered locus">Rv3282</name>
    <name type="ORF">MTCY71.22</name>
</gene>
<organism>
    <name type="scientific">Mycobacterium tuberculosis (strain ATCC 25618 / H37Rv)</name>
    <dbReference type="NCBI Taxonomy" id="83332"/>
    <lineage>
        <taxon>Bacteria</taxon>
        <taxon>Bacillati</taxon>
        <taxon>Actinomycetota</taxon>
        <taxon>Actinomycetes</taxon>
        <taxon>Mycobacteriales</taxon>
        <taxon>Mycobacteriaceae</taxon>
        <taxon>Mycobacterium</taxon>
        <taxon>Mycobacterium tuberculosis complex</taxon>
    </lineage>
</organism>
<protein>
    <recommendedName>
        <fullName evidence="1">Nucleoside triphosphate pyrophosphatase</fullName>
        <ecNumber evidence="1">3.6.1.9</ecNumber>
    </recommendedName>
    <alternativeName>
        <fullName evidence="1">Nucleotide pyrophosphatase</fullName>
        <shortName evidence="1">Nucleotide PPase</shortName>
    </alternativeName>
</protein>
<name>NTPP_MYCTU</name>
<keyword id="KW-0963">Cytoplasm</keyword>
<keyword id="KW-0378">Hydrolase</keyword>
<keyword id="KW-0546">Nucleotide metabolism</keyword>
<keyword id="KW-1185">Reference proteome</keyword>